<accession>Q2R2D5</accession>
<accession>A0A0P0Y3N4</accession>
<accession>A0PI95</accession>
<accession>A3CCH4</accession>
<proteinExistence type="evidence at protein level"/>
<name>XA21_ORYSJ</name>
<dbReference type="EC" id="2.7.11.1" evidence="1 3"/>
<dbReference type="EMBL" id="DP000010">
    <property type="protein sequence ID" value="ABA94328.1"/>
    <property type="molecule type" value="Genomic_DNA"/>
</dbReference>
<dbReference type="EMBL" id="AP014967">
    <property type="protein sequence ID" value="BAT14519.1"/>
    <property type="status" value="ALT_SEQ"/>
    <property type="molecule type" value="Genomic_DNA"/>
</dbReference>
<dbReference type="EMBL" id="CM000148">
    <property type="protein sequence ID" value="EAZ18787.1"/>
    <property type="status" value="ALT_SEQ"/>
    <property type="molecule type" value="Genomic_DNA"/>
</dbReference>
<dbReference type="EMBL" id="AY885781">
    <property type="protein sequence ID" value="AAY32490.1"/>
    <property type="molecule type" value="Genomic_DNA"/>
</dbReference>
<dbReference type="EMBL" id="AY885775">
    <property type="protein sequence ID" value="AAY32484.1"/>
    <property type="molecule type" value="Genomic_DNA"/>
</dbReference>
<dbReference type="EMBL" id="AY885776">
    <property type="protein sequence ID" value="AAY32485.1"/>
    <property type="molecule type" value="Genomic_DNA"/>
</dbReference>
<dbReference type="EMBL" id="AY885777">
    <property type="protein sequence ID" value="AAY32486.1"/>
    <property type="molecule type" value="Genomic_DNA"/>
</dbReference>
<dbReference type="EMBL" id="AY885778">
    <property type="protein sequence ID" value="AAY32487.1"/>
    <property type="molecule type" value="Genomic_DNA"/>
</dbReference>
<dbReference type="EMBL" id="AY885779">
    <property type="protein sequence ID" value="AAY32488.1"/>
    <property type="molecule type" value="Genomic_DNA"/>
</dbReference>
<dbReference type="EMBL" id="AY885780">
    <property type="protein sequence ID" value="AAY32489.1"/>
    <property type="molecule type" value="Genomic_DNA"/>
</dbReference>
<dbReference type="SMR" id="Q2R2D5"/>
<dbReference type="FunCoup" id="Q2R2D5">
    <property type="interactions" value="155"/>
</dbReference>
<dbReference type="STRING" id="39947.Q2R2D5"/>
<dbReference type="GlyCosmos" id="Q2R2D5">
    <property type="glycosylation" value="17 sites, No reported glycans"/>
</dbReference>
<dbReference type="PaxDb" id="39947-Q2R2D5"/>
<dbReference type="EnsemblPlants" id="Os11t0569733-01">
    <property type="protein sequence ID" value="Os11t0569733-01"/>
    <property type="gene ID" value="Os11g0569733"/>
</dbReference>
<dbReference type="GeneID" id="107276510"/>
<dbReference type="Gramene" id="Os11t0569733-01">
    <property type="protein sequence ID" value="Os11t0569733-01"/>
    <property type="gene ID" value="Os11g0569733"/>
</dbReference>
<dbReference type="KEGG" id="osa:107276510"/>
<dbReference type="HOGENOM" id="CLU_000288_22_0_1"/>
<dbReference type="InParanoid" id="Q2R2D5"/>
<dbReference type="OrthoDB" id="694479at2759"/>
<dbReference type="Proteomes" id="UP000007752">
    <property type="component" value="Chromosome 11"/>
</dbReference>
<dbReference type="Proteomes" id="UP000059680">
    <property type="component" value="Chromosome 11"/>
</dbReference>
<dbReference type="GO" id="GO:0032541">
    <property type="term" value="C:cortical endoplasmic reticulum"/>
    <property type="evidence" value="ECO:0000314"/>
    <property type="project" value="UniProtKB"/>
</dbReference>
<dbReference type="GO" id="GO:0005789">
    <property type="term" value="C:endoplasmic reticulum membrane"/>
    <property type="evidence" value="ECO:0000314"/>
    <property type="project" value="UniProtKB"/>
</dbReference>
<dbReference type="GO" id="GO:0005634">
    <property type="term" value="C:nucleus"/>
    <property type="evidence" value="ECO:0000314"/>
    <property type="project" value="UniProtKB"/>
</dbReference>
<dbReference type="GO" id="GO:1990578">
    <property type="term" value="C:perinuclear endoplasmic reticulum membrane"/>
    <property type="evidence" value="ECO:0000314"/>
    <property type="project" value="UniProtKB"/>
</dbReference>
<dbReference type="GO" id="GO:0005886">
    <property type="term" value="C:plasma membrane"/>
    <property type="evidence" value="ECO:0000314"/>
    <property type="project" value="UniProtKB"/>
</dbReference>
<dbReference type="GO" id="GO:0005524">
    <property type="term" value="F:ATP binding"/>
    <property type="evidence" value="ECO:0007669"/>
    <property type="project" value="UniProtKB-KW"/>
</dbReference>
<dbReference type="GO" id="GO:0106310">
    <property type="term" value="F:protein serine kinase activity"/>
    <property type="evidence" value="ECO:0007669"/>
    <property type="project" value="RHEA"/>
</dbReference>
<dbReference type="GO" id="GO:0004674">
    <property type="term" value="F:protein serine/threonine kinase activity"/>
    <property type="evidence" value="ECO:0007669"/>
    <property type="project" value="UniProtKB-KW"/>
</dbReference>
<dbReference type="GO" id="GO:0006952">
    <property type="term" value="P:defense response"/>
    <property type="evidence" value="ECO:0007669"/>
    <property type="project" value="UniProtKB-KW"/>
</dbReference>
<dbReference type="FunFam" id="3.30.200.20:FF:000432">
    <property type="entry name" value="LRR receptor-like serine/threonine-protein kinase EFR"/>
    <property type="match status" value="1"/>
</dbReference>
<dbReference type="FunFam" id="3.80.10.10:FF:000693">
    <property type="entry name" value="LRR receptor-like serine/threonine-protein kinase EFR"/>
    <property type="match status" value="1"/>
</dbReference>
<dbReference type="FunFam" id="1.10.510.10:FF:000358">
    <property type="entry name" value="Putative leucine-rich repeat receptor-like serine/threonine-protein kinase"/>
    <property type="match status" value="1"/>
</dbReference>
<dbReference type="FunFam" id="3.80.10.10:FF:001981">
    <property type="entry name" value="Receptor kinase-like protein Xa21"/>
    <property type="match status" value="1"/>
</dbReference>
<dbReference type="FunFam" id="3.80.10.10:FF:002683">
    <property type="entry name" value="Receptor kinase-like protein Xa21"/>
    <property type="match status" value="1"/>
</dbReference>
<dbReference type="Gene3D" id="3.30.200.20">
    <property type="entry name" value="Phosphorylase Kinase, domain 1"/>
    <property type="match status" value="1"/>
</dbReference>
<dbReference type="Gene3D" id="3.80.10.10">
    <property type="entry name" value="Ribonuclease Inhibitor"/>
    <property type="match status" value="4"/>
</dbReference>
<dbReference type="Gene3D" id="1.10.510.10">
    <property type="entry name" value="Transferase(Phosphotransferase) domain 1"/>
    <property type="match status" value="1"/>
</dbReference>
<dbReference type="InterPro" id="IPR011009">
    <property type="entry name" value="Kinase-like_dom_sf"/>
</dbReference>
<dbReference type="InterPro" id="IPR001611">
    <property type="entry name" value="Leu-rich_rpt"/>
</dbReference>
<dbReference type="InterPro" id="IPR003591">
    <property type="entry name" value="Leu-rich_rpt_typical-subtyp"/>
</dbReference>
<dbReference type="InterPro" id="IPR032675">
    <property type="entry name" value="LRR_dom_sf"/>
</dbReference>
<dbReference type="InterPro" id="IPR013210">
    <property type="entry name" value="LRR_N_plant-typ"/>
</dbReference>
<dbReference type="InterPro" id="IPR051809">
    <property type="entry name" value="Plant_receptor-like_S/T_kinase"/>
</dbReference>
<dbReference type="InterPro" id="IPR000719">
    <property type="entry name" value="Prot_kinase_dom"/>
</dbReference>
<dbReference type="InterPro" id="IPR017441">
    <property type="entry name" value="Protein_kinase_ATP_BS"/>
</dbReference>
<dbReference type="InterPro" id="IPR008271">
    <property type="entry name" value="Ser/Thr_kinase_AS"/>
</dbReference>
<dbReference type="PANTHER" id="PTHR27008">
    <property type="entry name" value="OS04G0122200 PROTEIN"/>
    <property type="match status" value="1"/>
</dbReference>
<dbReference type="PANTHER" id="PTHR27008:SF588">
    <property type="entry name" value="RECEPTOR KINASE-LIKE PROTEIN XA21"/>
    <property type="match status" value="1"/>
</dbReference>
<dbReference type="Pfam" id="PF00560">
    <property type="entry name" value="LRR_1"/>
    <property type="match status" value="3"/>
</dbReference>
<dbReference type="Pfam" id="PF13855">
    <property type="entry name" value="LRR_8"/>
    <property type="match status" value="3"/>
</dbReference>
<dbReference type="Pfam" id="PF08263">
    <property type="entry name" value="LRRNT_2"/>
    <property type="match status" value="1"/>
</dbReference>
<dbReference type="Pfam" id="PF00069">
    <property type="entry name" value="Pkinase"/>
    <property type="match status" value="1"/>
</dbReference>
<dbReference type="PRINTS" id="PR00019">
    <property type="entry name" value="LEURICHRPT"/>
</dbReference>
<dbReference type="SMART" id="SM00369">
    <property type="entry name" value="LRR_TYP"/>
    <property type="match status" value="12"/>
</dbReference>
<dbReference type="SMART" id="SM00220">
    <property type="entry name" value="S_TKc"/>
    <property type="match status" value="1"/>
</dbReference>
<dbReference type="SUPFAM" id="SSF52058">
    <property type="entry name" value="L domain-like"/>
    <property type="match status" value="1"/>
</dbReference>
<dbReference type="SUPFAM" id="SSF56112">
    <property type="entry name" value="Protein kinase-like (PK-like)"/>
    <property type="match status" value="1"/>
</dbReference>
<dbReference type="SUPFAM" id="SSF52047">
    <property type="entry name" value="RNI-like"/>
    <property type="match status" value="1"/>
</dbReference>
<dbReference type="PROSITE" id="PS00107">
    <property type="entry name" value="PROTEIN_KINASE_ATP"/>
    <property type="match status" value="1"/>
</dbReference>
<dbReference type="PROSITE" id="PS50011">
    <property type="entry name" value="PROTEIN_KINASE_DOM"/>
    <property type="match status" value="1"/>
</dbReference>
<dbReference type="PROSITE" id="PS00108">
    <property type="entry name" value="PROTEIN_KINASE_ST"/>
    <property type="match status" value="1"/>
</dbReference>
<sequence>MARSPTSVMISSLLLLLLIGPASSDDAAAAAAARTSTGGVAGDELALLSFKSSLLHQGGLSLASWNTSGHGQHCTWVGVVCGRRRRRHPHRVVKLLLRSSNLSGIISPSLGNLSFLRELDLSDNYLSGEIPPELSRLSRLQLLELSGNSIQGSIPAAIGACTKLTSLDLSHNQLRGMIPREIGASLKHLSNLYLHTNGLSGEIPSALGNLTSLQYFDLSCNRLSGAIPSSLGQLSSSLLTMNLRQNNLSGMIPNSIWNLSSLRAFSVSENKLGGMIPTNAFKTLHLLEVIDMGTNRFYGKIPASVANASHLTQLQIDGNLFSGIITSGFGRLRNLTTLYLWRNLFQTREQEDWGFISDLTNCSKLQTLDLGENNLGGVLPNSFSNLSTSLSFLALDLNKITGSIPKDIGNLIGLQHLYLCNNNFRGSLPSSLGRLRNLGILVAYENNLSGSIPLAIGNLTELNILLLGTNKFSGWIPYTLSNLTNLLSLGLSTNNLSGPIPSELFNIQTLSIMINVSKNNLEGSIPQEIGHLKNLVEFHAESNRLSGKIPNTLGDCQLLRYLYLQNNLLSGSIPSALGQLKGLETLDLSSNNLSGQIPTSLADITMLHSLNLSFNSFMGEVPTIGAFADASGISIQGNAKLCGGIPDLHLPRCCPLLENRKHFPVLPISVSLVAALAILSSLYLLITWHKRTKKGAPSRTSMKGHPLVSYSQLVKATDGFAPTNLLGSGSFGSVYKGKLNIQDHVAVKVLKLENPKALKSFTAECEALRNMRHRNLVKIVTICSSIDNRGNDFKAIVYDFMPSGSLEDWIHPETNDPADQRHLNLHRRVTILLDVACALDYLHRHGPEPVVHCDVKSSNVLLDSDMVAHVGDFGLARILVDGTSLIQQSTSSMGFRGTIGYAAPEYGVGHIASTHGDIYSYGILVLEIVTGKRPTDSTFRPDLGLRQYVELGLHGRVTDVVDTKLILDSENWLNSTNNSPCRRITECIVSLLRLGLSCSQVLPLSRTPTGDIIDELNAIKQNLSGLFPVCEGASLEF</sequence>
<protein>
    <recommendedName>
        <fullName evidence="7">Receptor kinase-like protein Xa21</fullName>
        <ecNumber evidence="1 3">2.7.11.1</ecNumber>
    </recommendedName>
    <component>
        <recommendedName>
            <fullName evidence="7">Receptor kinase-like protein Xa21, processed</fullName>
        </recommendedName>
    </component>
</protein>
<comment type="function">
    <molecule>Receptor kinase-like protein Xa21</molecule>
    <text evidence="5">Receptor kinase that detects X.oryzae pv. oryzae protein Ax21 to promote innate immunity. Following X.oryzae pv. oryzae protein Ax21 detection, undergoes cleavage, releasing the processed protein kinase Xa21 chain.</text>
</comment>
<comment type="function">
    <molecule>Receptor kinase-like protein Xa21, processed</molecule>
    <text evidence="5">The processed protein kinase Xa21 chain released by protein cleavage after X.oryzae pv. oryzae protein Ax21 detection translocates into the nucleus where it can bind and regulate WRKY62, a transcription factor. Confers resistance to the bacterial pathogen X.oryzae pv. oryzae (Xoo).</text>
</comment>
<comment type="catalytic activity">
    <reaction evidence="1">
        <text>L-seryl-[protein] + ATP = O-phospho-L-seryl-[protein] + ADP + H(+)</text>
        <dbReference type="Rhea" id="RHEA:17989"/>
        <dbReference type="Rhea" id="RHEA-COMP:9863"/>
        <dbReference type="Rhea" id="RHEA-COMP:11604"/>
        <dbReference type="ChEBI" id="CHEBI:15378"/>
        <dbReference type="ChEBI" id="CHEBI:29999"/>
        <dbReference type="ChEBI" id="CHEBI:30616"/>
        <dbReference type="ChEBI" id="CHEBI:83421"/>
        <dbReference type="ChEBI" id="CHEBI:456216"/>
        <dbReference type="EC" id="2.7.11.1"/>
    </reaction>
</comment>
<comment type="catalytic activity">
    <reaction evidence="1">
        <text>L-threonyl-[protein] + ATP = O-phospho-L-threonyl-[protein] + ADP + H(+)</text>
        <dbReference type="Rhea" id="RHEA:46608"/>
        <dbReference type="Rhea" id="RHEA-COMP:11060"/>
        <dbReference type="Rhea" id="RHEA-COMP:11605"/>
        <dbReference type="ChEBI" id="CHEBI:15378"/>
        <dbReference type="ChEBI" id="CHEBI:30013"/>
        <dbReference type="ChEBI" id="CHEBI:30616"/>
        <dbReference type="ChEBI" id="CHEBI:61977"/>
        <dbReference type="ChEBI" id="CHEBI:456216"/>
        <dbReference type="EC" id="2.7.11.1"/>
    </reaction>
</comment>
<comment type="cofactor">
    <cofactor evidence="1">
        <name>Mn(2+)</name>
        <dbReference type="ChEBI" id="CHEBI:29035"/>
    </cofactor>
    <cofactor evidence="1">
        <name>Mg(2+)</name>
        <dbReference type="ChEBI" id="CHEBI:18420"/>
    </cofactor>
    <text evidence="1">Enzymatic activity is fifteen time stronger with Mn(2+) than with Mg(2+).</text>
</comment>
<comment type="subunit">
    <molecule>Receptor kinase-like protein Xa21, processed</molecule>
    <text evidence="5 6">Interacts with WRKY62/XB10 in the nucleus (PubMed:22735448). Interacts with SERK2 (PubMed:24482436).</text>
</comment>
<comment type="subcellular location">
    <molecule>Receptor kinase-like protein Xa21</molecule>
    <subcellularLocation>
        <location evidence="5">Cell membrane</location>
        <topology evidence="2">Single-pass membrane protein</topology>
    </subcellularLocation>
    <subcellularLocation>
        <location evidence="5">Endoplasmic reticulum membrane</location>
        <topology evidence="2">Single-pass membrane protein</topology>
    </subcellularLocation>
    <text evidence="5">Present in cortical and perinuclear endoplasmic reticulum. Cleaved upon X.oryzae pv. oryzae protein Ax21 recognition; the kinase containing fragment is translocated into the nucleus.</text>
</comment>
<comment type="subcellular location">
    <molecule>Receptor kinase-like protein Xa21, processed</molecule>
    <subcellularLocation>
        <location evidence="5">Nucleus</location>
    </subcellularLocation>
</comment>
<comment type="PTM">
    <text evidence="5">Undergoes protein cleavage upon X.oryzae pv. oryzae protein Ax21 detection, thus releasing the processed protein kinase Xa21 chain.</text>
</comment>
<comment type="PTM">
    <text evidence="1">Autophosphorylated on serine and threonine residues; these phosphorylation prevents proteolytic degradation.</text>
</comment>
<comment type="similarity">
    <text evidence="3">Belongs to the protein kinase superfamily. Ser/Thr protein kinase family.</text>
</comment>
<comment type="sequence caution" evidence="8">
    <conflict type="erroneous gene model prediction">
        <sequence resource="EMBL-CDS" id="BAT14519"/>
    </conflict>
</comment>
<comment type="sequence caution" evidence="8">
    <conflict type="erroneous gene model prediction">
        <sequence resource="EMBL-CDS" id="EAZ18787"/>
    </conflict>
</comment>
<feature type="signal peptide" evidence="2">
    <location>
        <begin position="1"/>
        <end position="24"/>
    </location>
</feature>
<feature type="chain" id="PRO_5004214548" description="Receptor kinase-like protein Xa21">
    <location>
        <begin position="25"/>
        <end position="1037"/>
    </location>
</feature>
<feature type="chain" id="PRO_0000436962" description="Receptor kinase-like protein Xa21, processed">
    <location>
        <begin status="unknown"/>
        <end position="1037"/>
    </location>
</feature>
<feature type="topological domain" description="Extracellular" evidence="8">
    <location>
        <begin position="25"/>
        <end position="665"/>
    </location>
</feature>
<feature type="transmembrane region" description="Helical" evidence="2">
    <location>
        <begin position="666"/>
        <end position="686"/>
    </location>
</feature>
<feature type="topological domain" description="Cytoplasmic" evidence="8">
    <location>
        <begin position="687"/>
        <end position="1037"/>
    </location>
</feature>
<feature type="repeat" description="LRR 1" evidence="2">
    <location>
        <begin position="89"/>
        <end position="112"/>
    </location>
</feature>
<feature type="repeat" description="LRR 2" evidence="2">
    <location>
        <begin position="113"/>
        <end position="137"/>
    </location>
</feature>
<feature type="repeat" description="LRR 3" evidence="2">
    <location>
        <begin position="138"/>
        <end position="161"/>
    </location>
</feature>
<feature type="repeat" description="LRR 4" evidence="2">
    <location>
        <begin position="163"/>
        <end position="185"/>
    </location>
</feature>
<feature type="repeat" description="LRR 5" evidence="2">
    <location>
        <begin position="187"/>
        <end position="210"/>
    </location>
</feature>
<feature type="repeat" description="LRR 6" evidence="2">
    <location>
        <begin position="211"/>
        <end position="234"/>
    </location>
</feature>
<feature type="repeat" description="LRR 7" evidence="2">
    <location>
        <begin position="236"/>
        <end position="259"/>
    </location>
</feature>
<feature type="repeat" description="LRR 8" evidence="2">
    <location>
        <begin position="260"/>
        <end position="283"/>
    </location>
</feature>
<feature type="repeat" description="LRR 9" evidence="2">
    <location>
        <begin position="285"/>
        <end position="308"/>
    </location>
</feature>
<feature type="repeat" description="LRR 10" evidence="2">
    <location>
        <begin position="310"/>
        <end position="331"/>
    </location>
</feature>
<feature type="repeat" description="LRR 11" evidence="2">
    <location>
        <begin position="333"/>
        <end position="355"/>
    </location>
</feature>
<feature type="repeat" description="LRR 12" evidence="2">
    <location>
        <begin position="362"/>
        <end position="385"/>
    </location>
</feature>
<feature type="repeat" description="LRR 13" evidence="2">
    <location>
        <begin position="387"/>
        <end position="411"/>
    </location>
</feature>
<feature type="repeat" description="LRR 14" evidence="2">
    <location>
        <begin position="412"/>
        <end position="435"/>
    </location>
</feature>
<feature type="repeat" description="LRR 15" evidence="2">
    <location>
        <begin position="437"/>
        <end position="459"/>
    </location>
</feature>
<feature type="repeat" description="LRR 16" evidence="2">
    <location>
        <begin position="460"/>
        <end position="482"/>
    </location>
</feature>
<feature type="repeat" description="LRR 17" evidence="2">
    <location>
        <begin position="483"/>
        <end position="507"/>
    </location>
</feature>
<feature type="repeat" description="LRR 18" evidence="2">
    <location>
        <begin position="509"/>
        <end position="532"/>
    </location>
</feature>
<feature type="repeat" description="LRR 19" evidence="2">
    <location>
        <begin position="533"/>
        <end position="556"/>
    </location>
</feature>
<feature type="repeat" description="LRR 20" evidence="2">
    <location>
        <begin position="557"/>
        <end position="580"/>
    </location>
</feature>
<feature type="repeat" description="LRR 21" evidence="2">
    <location>
        <begin position="581"/>
        <end position="604"/>
    </location>
</feature>
<feature type="repeat" description="LRR 22" evidence="2">
    <location>
        <begin position="606"/>
        <end position="629"/>
    </location>
</feature>
<feature type="domain" description="Protein kinase" evidence="3">
    <location>
        <begin position="720"/>
        <end position="1019"/>
    </location>
</feature>
<feature type="short sequence motif" description="Nuclear localization signal" evidence="5">
    <location>
        <begin position="689"/>
        <end position="694"/>
    </location>
</feature>
<feature type="active site" description="Proton acceptor" evidence="3">
    <location>
        <position position="854"/>
    </location>
</feature>
<feature type="binding site" evidence="3">
    <location>
        <begin position="726"/>
        <end position="734"/>
    </location>
    <ligand>
        <name>ATP</name>
        <dbReference type="ChEBI" id="CHEBI:30616"/>
    </ligand>
</feature>
<feature type="binding site" evidence="3">
    <location>
        <position position="748"/>
    </location>
    <ligand>
        <name>ATP</name>
        <dbReference type="ChEBI" id="CHEBI:30616"/>
    </ligand>
</feature>
<feature type="modified residue" description="Phosphoserine" evidence="1">
    <location>
        <position position="698"/>
    </location>
</feature>
<feature type="modified residue" description="Phosphothreonine" evidence="1">
    <location>
        <position position="700"/>
    </location>
</feature>
<feature type="modified residue" description="Phosphoserine" evidence="1">
    <location>
        <position position="701"/>
    </location>
</feature>
<feature type="modified residue" description="Phosphothreonine" evidence="1">
    <location>
        <position position="717"/>
    </location>
</feature>
<feature type="glycosylation site" description="N-linked (GlcNAc...) asparagine" evidence="4">
    <location>
        <position position="66"/>
    </location>
</feature>
<feature type="glycosylation site" description="N-linked (GlcNAc...) asparagine" evidence="4">
    <location>
        <position position="101"/>
    </location>
</feature>
<feature type="glycosylation site" description="N-linked (GlcNAc...) asparagine" evidence="4">
    <location>
        <position position="112"/>
    </location>
</feature>
<feature type="glycosylation site" description="N-linked (GlcNAc...) asparagine" evidence="4">
    <location>
        <position position="209"/>
    </location>
</feature>
<feature type="glycosylation site" description="N-linked (GlcNAc...) asparagine" evidence="4">
    <location>
        <position position="247"/>
    </location>
</feature>
<feature type="glycosylation site" description="N-linked (GlcNAc...) asparagine" evidence="4">
    <location>
        <position position="258"/>
    </location>
</feature>
<feature type="glycosylation site" description="N-linked (GlcNAc...) asparagine" evidence="4">
    <location>
        <position position="307"/>
    </location>
</feature>
<feature type="glycosylation site" description="N-linked (GlcNAc...) asparagine" evidence="4">
    <location>
        <position position="334"/>
    </location>
</feature>
<feature type="glycosylation site" description="N-linked (GlcNAc...) asparagine" evidence="4">
    <location>
        <position position="361"/>
    </location>
</feature>
<feature type="glycosylation site" description="N-linked (GlcNAc...) asparagine" evidence="4">
    <location>
        <position position="385"/>
    </location>
</feature>
<feature type="glycosylation site" description="N-linked (GlcNAc...) asparagine" evidence="4">
    <location>
        <position position="447"/>
    </location>
</feature>
<feature type="glycosylation site" description="N-linked (GlcNAc...) asparagine" evidence="4">
    <location>
        <position position="458"/>
    </location>
</feature>
<feature type="glycosylation site" description="N-linked (GlcNAc...) asparagine" evidence="4">
    <location>
        <position position="482"/>
    </location>
</feature>
<feature type="glycosylation site" description="N-linked (GlcNAc...) asparagine" evidence="4">
    <location>
        <position position="495"/>
    </location>
</feature>
<feature type="glycosylation site" description="N-linked (GlcNAc...) asparagine" evidence="4">
    <location>
        <position position="515"/>
    </location>
</feature>
<feature type="glycosylation site" description="N-linked (GlcNAc...) asparagine" evidence="4">
    <location>
        <position position="592"/>
    </location>
</feature>
<feature type="glycosylation site" description="N-linked (GlcNAc...) asparagine" evidence="4">
    <location>
        <position position="611"/>
    </location>
</feature>
<feature type="mutagenesis site" description="Impaired nuclear localization." evidence="5">
    <original>HKRTKK</original>
    <variation>AAATAA</variation>
    <location>
        <begin position="689"/>
        <end position="694"/>
    </location>
</feature>
<keyword id="KW-0067">ATP-binding</keyword>
<keyword id="KW-1003">Cell membrane</keyword>
<keyword id="KW-0256">Endoplasmic reticulum</keyword>
<keyword id="KW-0325">Glycoprotein</keyword>
<keyword id="KW-0418">Kinase</keyword>
<keyword id="KW-0433">Leucine-rich repeat</keyword>
<keyword id="KW-0472">Membrane</keyword>
<keyword id="KW-0547">Nucleotide-binding</keyword>
<keyword id="KW-0539">Nucleus</keyword>
<keyword id="KW-0597">Phosphoprotein</keyword>
<keyword id="KW-0611">Plant defense</keyword>
<keyword id="KW-0675">Receptor</keyword>
<keyword id="KW-1185">Reference proteome</keyword>
<keyword id="KW-0677">Repeat</keyword>
<keyword id="KW-0723">Serine/threonine-protein kinase</keyword>
<keyword id="KW-0732">Signal</keyword>
<keyword id="KW-0808">Transferase</keyword>
<keyword id="KW-0812">Transmembrane</keyword>
<keyword id="KW-1133">Transmembrane helix</keyword>
<gene>
    <name evidence="7" type="primary">XA21</name>
    <name evidence="9" type="ordered locus">LOC_Os11g36180</name>
    <name evidence="10" type="ordered locus">Os11g0569733</name>
    <name evidence="11" type="ORF">OsJ_34314</name>
    <name evidence="10" type="ORF">OSNPB_110569733</name>
</gene>
<reference key="1">
    <citation type="journal article" date="2005" name="BMC Biol.">
        <title>The sequence of rice chromosomes 11 and 12, rich in disease resistance genes and recent gene duplications.</title>
        <authorList>
            <consortium name="The rice chromosomes 11 and 12 sequencing consortia"/>
        </authorList>
    </citation>
    <scope>NUCLEOTIDE SEQUENCE [LARGE SCALE GENOMIC DNA]</scope>
    <source>
        <strain>cv. Nipponbare</strain>
    </source>
</reference>
<reference key="2">
    <citation type="journal article" date="2005" name="Nature">
        <title>The map-based sequence of the rice genome.</title>
        <authorList>
            <consortium name="International rice genome sequencing project (IRGSP)"/>
        </authorList>
    </citation>
    <scope>NUCLEOTIDE SEQUENCE [LARGE SCALE GENOMIC DNA]</scope>
    <source>
        <strain>cv. Nipponbare</strain>
    </source>
</reference>
<reference key="3">
    <citation type="journal article" date="2013" name="Rice">
        <title>Improvement of the Oryza sativa Nipponbare reference genome using next generation sequence and optical map data.</title>
        <authorList>
            <person name="Kawahara Y."/>
            <person name="de la Bastide M."/>
            <person name="Hamilton J.P."/>
            <person name="Kanamori H."/>
            <person name="McCombie W.R."/>
            <person name="Ouyang S."/>
            <person name="Schwartz D.C."/>
            <person name="Tanaka T."/>
            <person name="Wu J."/>
            <person name="Zhou S."/>
            <person name="Childs K.L."/>
            <person name="Davidson R.M."/>
            <person name="Lin H."/>
            <person name="Quesada-Ocampo L."/>
            <person name="Vaillancourt B."/>
            <person name="Sakai H."/>
            <person name="Lee S.S."/>
            <person name="Kim J."/>
            <person name="Numa H."/>
            <person name="Itoh T."/>
            <person name="Buell C.R."/>
            <person name="Matsumoto T."/>
        </authorList>
    </citation>
    <scope>GENOME REANNOTATION</scope>
    <source>
        <strain>cv. Nipponbare</strain>
    </source>
</reference>
<reference key="4">
    <citation type="journal article" date="2005" name="PLoS Biol.">
        <title>The genomes of Oryza sativa: a history of duplications.</title>
        <authorList>
            <person name="Yu J."/>
            <person name="Wang J."/>
            <person name="Lin W."/>
            <person name="Li S."/>
            <person name="Li H."/>
            <person name="Zhou J."/>
            <person name="Ni P."/>
            <person name="Dong W."/>
            <person name="Hu S."/>
            <person name="Zeng C."/>
            <person name="Zhang J."/>
            <person name="Zhang Y."/>
            <person name="Li R."/>
            <person name="Xu Z."/>
            <person name="Li S."/>
            <person name="Li X."/>
            <person name="Zheng H."/>
            <person name="Cong L."/>
            <person name="Lin L."/>
            <person name="Yin J."/>
            <person name="Geng J."/>
            <person name="Li G."/>
            <person name="Shi J."/>
            <person name="Liu J."/>
            <person name="Lv H."/>
            <person name="Li J."/>
            <person name="Wang J."/>
            <person name="Deng Y."/>
            <person name="Ran L."/>
            <person name="Shi X."/>
            <person name="Wang X."/>
            <person name="Wu Q."/>
            <person name="Li C."/>
            <person name="Ren X."/>
            <person name="Wang J."/>
            <person name="Wang X."/>
            <person name="Li D."/>
            <person name="Liu D."/>
            <person name="Zhang X."/>
            <person name="Ji Z."/>
            <person name="Zhao W."/>
            <person name="Sun Y."/>
            <person name="Zhang Z."/>
            <person name="Bao J."/>
            <person name="Han Y."/>
            <person name="Dong L."/>
            <person name="Ji J."/>
            <person name="Chen P."/>
            <person name="Wu S."/>
            <person name="Liu J."/>
            <person name="Xiao Y."/>
            <person name="Bu D."/>
            <person name="Tan J."/>
            <person name="Yang L."/>
            <person name="Ye C."/>
            <person name="Zhang J."/>
            <person name="Xu J."/>
            <person name="Zhou Y."/>
            <person name="Yu Y."/>
            <person name="Zhang B."/>
            <person name="Zhuang S."/>
            <person name="Wei H."/>
            <person name="Liu B."/>
            <person name="Lei M."/>
            <person name="Yu H."/>
            <person name="Li Y."/>
            <person name="Xu H."/>
            <person name="Wei S."/>
            <person name="He X."/>
            <person name="Fang L."/>
            <person name="Zhang Z."/>
            <person name="Zhang Y."/>
            <person name="Huang X."/>
            <person name="Su Z."/>
            <person name="Tong W."/>
            <person name="Li J."/>
            <person name="Tong Z."/>
            <person name="Li S."/>
            <person name="Ye J."/>
            <person name="Wang L."/>
            <person name="Fang L."/>
            <person name="Lei T."/>
            <person name="Chen C.-S."/>
            <person name="Chen H.-C."/>
            <person name="Xu Z."/>
            <person name="Li H."/>
            <person name="Huang H."/>
            <person name="Zhang F."/>
            <person name="Xu H."/>
            <person name="Li N."/>
            <person name="Zhao C."/>
            <person name="Li S."/>
            <person name="Dong L."/>
            <person name="Huang Y."/>
            <person name="Li L."/>
            <person name="Xi Y."/>
            <person name="Qi Q."/>
            <person name="Li W."/>
            <person name="Zhang B."/>
            <person name="Hu W."/>
            <person name="Zhang Y."/>
            <person name="Tian X."/>
            <person name="Jiao Y."/>
            <person name="Liang X."/>
            <person name="Jin J."/>
            <person name="Gao L."/>
            <person name="Zheng W."/>
            <person name="Hao B."/>
            <person name="Liu S.-M."/>
            <person name="Wang W."/>
            <person name="Yuan L."/>
            <person name="Cao M."/>
            <person name="McDermott J."/>
            <person name="Samudrala R."/>
            <person name="Wang J."/>
            <person name="Wong G.K.-S."/>
            <person name="Yang H."/>
        </authorList>
    </citation>
    <scope>NUCLEOTIDE SEQUENCE [LARGE SCALE GENOMIC DNA]</scope>
    <source>
        <strain>cv. Nipponbare</strain>
    </source>
</reference>
<reference key="5">
    <citation type="journal article" date="2006" name="PLoS Genet.">
        <title>Genomic variation in rice: genesis of highly polymorphic linkage blocks during domestication.</title>
        <authorList>
            <person name="Tang T."/>
            <person name="Lu J."/>
            <person name="Huang J."/>
            <person name="He J."/>
            <person name="McCouch S.R."/>
            <person name="Shen Y."/>
            <person name="Kai Z."/>
            <person name="Purugganan M.D."/>
            <person name="Shi S."/>
            <person name="Wu C.-I."/>
        </authorList>
    </citation>
    <scope>NUCLEOTIDE SEQUENCE [GENOMIC DNA] OF 398-760</scope>
</reference>
<reference key="6">
    <citation type="journal article" date="2012" name="Nat. Commun.">
        <title>Cleavage and nuclear localization of the rice XA21 immune receptor.</title>
        <authorList>
            <person name="Park C.J."/>
            <person name="Ronald P.C."/>
        </authorList>
    </citation>
    <scope>FUNCTION (RECEPTOR KINASE-LIKE PROTEIN XA21)</scope>
    <scope>FUNCTION (RECEPTOR KINASE-LIKE PROTEIN XA21</scope>
    <scope>PROCESSED)</scope>
    <scope>SUBCELLULAR LOCATION</scope>
    <scope>INTERACTION WITH WRKY62</scope>
    <scope>MUTAGENESIS OF 689-HIS--LYS-694</scope>
    <scope>NUCLEAR LOCALIZATION SIGNAL</scope>
    <scope>PROTEOLYTIC PROCESSING</scope>
</reference>
<reference key="7">
    <citation type="journal article" date="2014" name="Mol. Plant">
        <title>An XA21-associated kinase (OsSERK2) regulates immunity mediated by the XA21 and XA3 immune receptors.</title>
        <authorList>
            <person name="Chen X."/>
            <person name="Zuo S."/>
            <person name="Schwessinger B."/>
            <person name="Chern M."/>
            <person name="Canlas P.E."/>
            <person name="Ruan D."/>
            <person name="Zhou X."/>
            <person name="Wang J."/>
            <person name="Daudi A."/>
            <person name="Petzold C.J."/>
            <person name="Heazlewood J.L."/>
            <person name="Ronald P.C."/>
        </authorList>
    </citation>
    <scope>INTERACTION WITH SERK2</scope>
</reference>
<organism>
    <name type="scientific">Oryza sativa subsp. japonica</name>
    <name type="common">Rice</name>
    <dbReference type="NCBI Taxonomy" id="39947"/>
    <lineage>
        <taxon>Eukaryota</taxon>
        <taxon>Viridiplantae</taxon>
        <taxon>Streptophyta</taxon>
        <taxon>Embryophyta</taxon>
        <taxon>Tracheophyta</taxon>
        <taxon>Spermatophyta</taxon>
        <taxon>Magnoliopsida</taxon>
        <taxon>Liliopsida</taxon>
        <taxon>Poales</taxon>
        <taxon>Poaceae</taxon>
        <taxon>BOP clade</taxon>
        <taxon>Oryzoideae</taxon>
        <taxon>Oryzeae</taxon>
        <taxon>Oryzinae</taxon>
        <taxon>Oryza</taxon>
        <taxon>Oryza sativa</taxon>
    </lineage>
</organism>
<evidence type="ECO:0000250" key="1">
    <source>
        <dbReference type="UniProtKB" id="Q1MX30"/>
    </source>
</evidence>
<evidence type="ECO:0000255" key="2"/>
<evidence type="ECO:0000255" key="3">
    <source>
        <dbReference type="PROSITE-ProRule" id="PRU00159"/>
    </source>
</evidence>
<evidence type="ECO:0000255" key="4">
    <source>
        <dbReference type="PROSITE-ProRule" id="PRU00498"/>
    </source>
</evidence>
<evidence type="ECO:0000269" key="5">
    <source>
    </source>
</evidence>
<evidence type="ECO:0000269" key="6">
    <source>
    </source>
</evidence>
<evidence type="ECO:0000303" key="7">
    <source>
    </source>
</evidence>
<evidence type="ECO:0000305" key="8"/>
<evidence type="ECO:0000312" key="9">
    <source>
        <dbReference type="EMBL" id="ABA94328.1"/>
    </source>
</evidence>
<evidence type="ECO:0000312" key="10">
    <source>
        <dbReference type="EMBL" id="BAT14519.1"/>
    </source>
</evidence>
<evidence type="ECO:0000312" key="11">
    <source>
        <dbReference type="EMBL" id="EAZ18787.1"/>
    </source>
</evidence>